<comment type="function">
    <text evidence="1">DNA-dependent RNA polymerase catalyzes the transcription of DNA into RNA using the four ribonucleoside triphosphates as substrates.</text>
</comment>
<comment type="catalytic activity">
    <reaction evidence="1">
        <text>RNA(n) + a ribonucleoside 5'-triphosphate = RNA(n+1) + diphosphate</text>
        <dbReference type="Rhea" id="RHEA:21248"/>
        <dbReference type="Rhea" id="RHEA-COMP:14527"/>
        <dbReference type="Rhea" id="RHEA-COMP:17342"/>
        <dbReference type="ChEBI" id="CHEBI:33019"/>
        <dbReference type="ChEBI" id="CHEBI:61557"/>
        <dbReference type="ChEBI" id="CHEBI:140395"/>
        <dbReference type="EC" id="2.7.7.6"/>
    </reaction>
</comment>
<comment type="cofactor">
    <cofactor evidence="1">
        <name>Mg(2+)</name>
        <dbReference type="ChEBI" id="CHEBI:18420"/>
    </cofactor>
    <text evidence="1">Binds 1 Mg(2+) ion per subunit.</text>
</comment>
<comment type="cofactor">
    <cofactor evidence="1">
        <name>Zn(2+)</name>
        <dbReference type="ChEBI" id="CHEBI:29105"/>
    </cofactor>
    <text evidence="1">Binds 2 Zn(2+) ions per subunit.</text>
</comment>
<comment type="subunit">
    <text evidence="1">The RNAP catalytic core consists of 2 alpha, 1 beta, 1 beta' and 1 omega subunit. When a sigma factor is associated with the core the holoenzyme is formed, which can initiate transcription.</text>
</comment>
<comment type="similarity">
    <text evidence="1">Belongs to the RNA polymerase beta' chain family.</text>
</comment>
<reference key="1">
    <citation type="journal article" date="2009" name="BMC Genomics">
        <title>Metabolic analysis of the soil microbe Dechloromonas aromatica str. RCB: indications of a surprisingly complex life-style and cryptic anaerobic pathways for aromatic degradation.</title>
        <authorList>
            <person name="Salinero K.K."/>
            <person name="Keller K."/>
            <person name="Feil W.S."/>
            <person name="Feil H."/>
            <person name="Trong S."/>
            <person name="Di Bartolo G."/>
            <person name="Lapidus A."/>
        </authorList>
    </citation>
    <scope>NUCLEOTIDE SEQUENCE [LARGE SCALE GENOMIC DNA]</scope>
    <source>
        <strain>RCB</strain>
    </source>
</reference>
<organism>
    <name type="scientific">Dechloromonas aromatica (strain RCB)</name>
    <dbReference type="NCBI Taxonomy" id="159087"/>
    <lineage>
        <taxon>Bacteria</taxon>
        <taxon>Pseudomonadati</taxon>
        <taxon>Pseudomonadota</taxon>
        <taxon>Betaproteobacteria</taxon>
        <taxon>Rhodocyclales</taxon>
        <taxon>Azonexaceae</taxon>
        <taxon>Dechloromonas</taxon>
    </lineage>
</organism>
<feature type="chain" id="PRO_0000225528" description="DNA-directed RNA polymerase subunit beta'">
    <location>
        <begin position="1"/>
        <end position="1403"/>
    </location>
</feature>
<feature type="binding site" evidence="1">
    <location>
        <position position="70"/>
    </location>
    <ligand>
        <name>Zn(2+)</name>
        <dbReference type="ChEBI" id="CHEBI:29105"/>
        <label>1</label>
    </ligand>
</feature>
<feature type="binding site" evidence="1">
    <location>
        <position position="72"/>
    </location>
    <ligand>
        <name>Zn(2+)</name>
        <dbReference type="ChEBI" id="CHEBI:29105"/>
        <label>1</label>
    </ligand>
</feature>
<feature type="binding site" evidence="1">
    <location>
        <position position="85"/>
    </location>
    <ligand>
        <name>Zn(2+)</name>
        <dbReference type="ChEBI" id="CHEBI:29105"/>
        <label>1</label>
    </ligand>
</feature>
<feature type="binding site" evidence="1">
    <location>
        <position position="88"/>
    </location>
    <ligand>
        <name>Zn(2+)</name>
        <dbReference type="ChEBI" id="CHEBI:29105"/>
        <label>1</label>
    </ligand>
</feature>
<feature type="binding site" evidence="1">
    <location>
        <position position="461"/>
    </location>
    <ligand>
        <name>Mg(2+)</name>
        <dbReference type="ChEBI" id="CHEBI:18420"/>
    </ligand>
</feature>
<feature type="binding site" evidence="1">
    <location>
        <position position="463"/>
    </location>
    <ligand>
        <name>Mg(2+)</name>
        <dbReference type="ChEBI" id="CHEBI:18420"/>
    </ligand>
</feature>
<feature type="binding site" evidence="1">
    <location>
        <position position="465"/>
    </location>
    <ligand>
        <name>Mg(2+)</name>
        <dbReference type="ChEBI" id="CHEBI:18420"/>
    </ligand>
</feature>
<feature type="binding site" evidence="1">
    <location>
        <position position="816"/>
    </location>
    <ligand>
        <name>Zn(2+)</name>
        <dbReference type="ChEBI" id="CHEBI:29105"/>
        <label>2</label>
    </ligand>
</feature>
<feature type="binding site" evidence="1">
    <location>
        <position position="890"/>
    </location>
    <ligand>
        <name>Zn(2+)</name>
        <dbReference type="ChEBI" id="CHEBI:29105"/>
        <label>2</label>
    </ligand>
</feature>
<feature type="binding site" evidence="1">
    <location>
        <position position="897"/>
    </location>
    <ligand>
        <name>Zn(2+)</name>
        <dbReference type="ChEBI" id="CHEBI:29105"/>
        <label>2</label>
    </ligand>
</feature>
<feature type="binding site" evidence="1">
    <location>
        <position position="900"/>
    </location>
    <ligand>
        <name>Zn(2+)</name>
        <dbReference type="ChEBI" id="CHEBI:29105"/>
        <label>2</label>
    </ligand>
</feature>
<name>RPOC_DECAR</name>
<accession>Q47JA9</accession>
<proteinExistence type="inferred from homology"/>
<dbReference type="EC" id="2.7.7.6" evidence="1"/>
<dbReference type="EMBL" id="CP000089">
    <property type="protein sequence ID" value="AAZ45072.1"/>
    <property type="molecule type" value="Genomic_DNA"/>
</dbReference>
<dbReference type="SMR" id="Q47JA9"/>
<dbReference type="STRING" id="159087.Daro_0313"/>
<dbReference type="KEGG" id="dar:Daro_0313"/>
<dbReference type="eggNOG" id="COG0086">
    <property type="taxonomic scope" value="Bacteria"/>
</dbReference>
<dbReference type="HOGENOM" id="CLU_000524_3_1_4"/>
<dbReference type="OrthoDB" id="9815296at2"/>
<dbReference type="GO" id="GO:0000428">
    <property type="term" value="C:DNA-directed RNA polymerase complex"/>
    <property type="evidence" value="ECO:0007669"/>
    <property type="project" value="UniProtKB-KW"/>
</dbReference>
<dbReference type="GO" id="GO:0003677">
    <property type="term" value="F:DNA binding"/>
    <property type="evidence" value="ECO:0007669"/>
    <property type="project" value="UniProtKB-UniRule"/>
</dbReference>
<dbReference type="GO" id="GO:0003899">
    <property type="term" value="F:DNA-directed RNA polymerase activity"/>
    <property type="evidence" value="ECO:0007669"/>
    <property type="project" value="UniProtKB-UniRule"/>
</dbReference>
<dbReference type="GO" id="GO:0000287">
    <property type="term" value="F:magnesium ion binding"/>
    <property type="evidence" value="ECO:0007669"/>
    <property type="project" value="UniProtKB-UniRule"/>
</dbReference>
<dbReference type="GO" id="GO:0008270">
    <property type="term" value="F:zinc ion binding"/>
    <property type="evidence" value="ECO:0007669"/>
    <property type="project" value="UniProtKB-UniRule"/>
</dbReference>
<dbReference type="GO" id="GO:0006351">
    <property type="term" value="P:DNA-templated transcription"/>
    <property type="evidence" value="ECO:0007669"/>
    <property type="project" value="UniProtKB-UniRule"/>
</dbReference>
<dbReference type="CDD" id="cd02655">
    <property type="entry name" value="RNAP_beta'_C"/>
    <property type="match status" value="1"/>
</dbReference>
<dbReference type="CDD" id="cd01609">
    <property type="entry name" value="RNAP_beta'_N"/>
    <property type="match status" value="1"/>
</dbReference>
<dbReference type="FunFam" id="1.10.132.30:FF:000003">
    <property type="entry name" value="DNA-directed RNA polymerase subunit beta"/>
    <property type="match status" value="1"/>
</dbReference>
<dbReference type="FunFam" id="1.10.150.390:FF:000002">
    <property type="entry name" value="DNA-directed RNA polymerase subunit beta"/>
    <property type="match status" value="1"/>
</dbReference>
<dbReference type="FunFam" id="1.10.40.90:FF:000001">
    <property type="entry name" value="DNA-directed RNA polymerase subunit beta"/>
    <property type="match status" value="1"/>
</dbReference>
<dbReference type="FunFam" id="4.10.860.120:FF:000001">
    <property type="entry name" value="DNA-directed RNA polymerase subunit beta"/>
    <property type="match status" value="1"/>
</dbReference>
<dbReference type="Gene3D" id="1.10.132.30">
    <property type="match status" value="1"/>
</dbReference>
<dbReference type="Gene3D" id="1.10.150.390">
    <property type="match status" value="1"/>
</dbReference>
<dbReference type="Gene3D" id="1.10.1790.20">
    <property type="match status" value="1"/>
</dbReference>
<dbReference type="Gene3D" id="1.10.40.90">
    <property type="match status" value="1"/>
</dbReference>
<dbReference type="Gene3D" id="2.40.40.20">
    <property type="match status" value="1"/>
</dbReference>
<dbReference type="Gene3D" id="2.40.50.100">
    <property type="match status" value="3"/>
</dbReference>
<dbReference type="Gene3D" id="4.10.860.120">
    <property type="entry name" value="RNA polymerase II, clamp domain"/>
    <property type="match status" value="1"/>
</dbReference>
<dbReference type="Gene3D" id="1.10.274.100">
    <property type="entry name" value="RNA polymerase Rpb1, domain 3"/>
    <property type="match status" value="1"/>
</dbReference>
<dbReference type="HAMAP" id="MF_01322">
    <property type="entry name" value="RNApol_bact_RpoC"/>
    <property type="match status" value="1"/>
</dbReference>
<dbReference type="InterPro" id="IPR045867">
    <property type="entry name" value="DNA-dir_RpoC_beta_prime"/>
</dbReference>
<dbReference type="InterPro" id="IPR012754">
    <property type="entry name" value="DNA-dir_RpoC_beta_prime_bact"/>
</dbReference>
<dbReference type="InterPro" id="IPR000722">
    <property type="entry name" value="RNA_pol_asu"/>
</dbReference>
<dbReference type="InterPro" id="IPR006592">
    <property type="entry name" value="RNA_pol_N"/>
</dbReference>
<dbReference type="InterPro" id="IPR007080">
    <property type="entry name" value="RNA_pol_Rpb1_1"/>
</dbReference>
<dbReference type="InterPro" id="IPR007066">
    <property type="entry name" value="RNA_pol_Rpb1_3"/>
</dbReference>
<dbReference type="InterPro" id="IPR042102">
    <property type="entry name" value="RNA_pol_Rpb1_3_sf"/>
</dbReference>
<dbReference type="InterPro" id="IPR007083">
    <property type="entry name" value="RNA_pol_Rpb1_4"/>
</dbReference>
<dbReference type="InterPro" id="IPR007081">
    <property type="entry name" value="RNA_pol_Rpb1_5"/>
</dbReference>
<dbReference type="InterPro" id="IPR044893">
    <property type="entry name" value="RNA_pol_Rpb1_clamp_domain"/>
</dbReference>
<dbReference type="InterPro" id="IPR038120">
    <property type="entry name" value="Rpb1_funnel_sf"/>
</dbReference>
<dbReference type="NCBIfam" id="TIGR02386">
    <property type="entry name" value="rpoC_TIGR"/>
    <property type="match status" value="1"/>
</dbReference>
<dbReference type="PANTHER" id="PTHR19376">
    <property type="entry name" value="DNA-DIRECTED RNA POLYMERASE"/>
    <property type="match status" value="1"/>
</dbReference>
<dbReference type="PANTHER" id="PTHR19376:SF54">
    <property type="entry name" value="DNA-DIRECTED RNA POLYMERASE SUBUNIT BETA"/>
    <property type="match status" value="1"/>
</dbReference>
<dbReference type="Pfam" id="PF04997">
    <property type="entry name" value="RNA_pol_Rpb1_1"/>
    <property type="match status" value="1"/>
</dbReference>
<dbReference type="Pfam" id="PF00623">
    <property type="entry name" value="RNA_pol_Rpb1_2"/>
    <property type="match status" value="1"/>
</dbReference>
<dbReference type="Pfam" id="PF04983">
    <property type="entry name" value="RNA_pol_Rpb1_3"/>
    <property type="match status" value="1"/>
</dbReference>
<dbReference type="Pfam" id="PF05000">
    <property type="entry name" value="RNA_pol_Rpb1_4"/>
    <property type="match status" value="1"/>
</dbReference>
<dbReference type="Pfam" id="PF04998">
    <property type="entry name" value="RNA_pol_Rpb1_5"/>
    <property type="match status" value="1"/>
</dbReference>
<dbReference type="SMART" id="SM00663">
    <property type="entry name" value="RPOLA_N"/>
    <property type="match status" value="1"/>
</dbReference>
<dbReference type="SUPFAM" id="SSF64484">
    <property type="entry name" value="beta and beta-prime subunits of DNA dependent RNA-polymerase"/>
    <property type="match status" value="1"/>
</dbReference>
<keyword id="KW-0240">DNA-directed RNA polymerase</keyword>
<keyword id="KW-0460">Magnesium</keyword>
<keyword id="KW-0479">Metal-binding</keyword>
<keyword id="KW-0548">Nucleotidyltransferase</keyword>
<keyword id="KW-0804">Transcription</keyword>
<keyword id="KW-0808">Transferase</keyword>
<keyword id="KW-0862">Zinc</keyword>
<protein>
    <recommendedName>
        <fullName evidence="1">DNA-directed RNA polymerase subunit beta'</fullName>
        <shortName evidence="1">RNAP subunit beta'</shortName>
        <ecNumber evidence="1">2.7.7.6</ecNumber>
    </recommendedName>
    <alternativeName>
        <fullName evidence="1">RNA polymerase subunit beta'</fullName>
    </alternativeName>
    <alternativeName>
        <fullName evidence="1">Transcriptase subunit beta'</fullName>
    </alternativeName>
</protein>
<gene>
    <name evidence="1" type="primary">rpoC</name>
    <name type="ordered locus">Daro_0313</name>
</gene>
<evidence type="ECO:0000255" key="1">
    <source>
        <dbReference type="HAMAP-Rule" id="MF_01322"/>
    </source>
</evidence>
<sequence length="1403" mass="155039">MKALLDLFKQVTAEEEFDAITIGLASPDKIRSWSYGEVKKPETINYRTFKPERDGLFCAKIFGPIKDYECLCGKYKRLKHRGVICEKCGVEVTLAKVRRDRMGHIELASPTAHIWFLKSLPSRLGMVLDMTLRDIERVLYFEAYVVTDPGMVSNLQRAQLLTEDQYLEMVEEHGDEFQALMGAEGIRELLRNLELDSEVESLHAELEVTGSEAKNKKLAKRLKILEGFQKSGIKPDWMILEVLPVLPPDLRPLVPLDGGRFATSDLNDLYRRVINRNNRLKRLLELKAPEIIVRNEKRMLQESVDSLLDNGRRGKAMTGANKRPLKSLADMIKGKGGRFRQNLLGKRVDYSGRSVIVVGPQLKLHQCGLPKLMALELFKPFIFHKLEVLGYATTIKQAKKMVEGQEPVVWDILEDVIREHPVMLNRAPTLHRLGIQAFEPTLIEGKAIQLHPLVCAAFNADFDGDQMAVHVPLSLEAQMEARTLMLASNNVLSPANGQPIIVPSQDIVLGLYYATREKINGKGEGMYFADTAEIERAMAAGQLDVHSRISVRLKQYEPAAVDGEWEEKTVRVETTAGRALLAKILPKGLPFKAIDRALKKKEISKLIDESFRRCGLKETVIFADKLMQNGYALATRAGISFCSDDMLVPAKKYEIISSAEAEVKEIETQYTNGLVTQGERYNKVVDIWGRTGDQVAKVMMEELGHEEVIDRHGKKVKQDSFNSIYMMADSGARGSAAQIRQLAGMRGLMAKPDGSIIETPITTNFREGLNVLQYFISTHGARKGLADTALKTANSGYLTRRLVDVTQDLVITEDDCGTKNGFVVKALVEGGEVIEALRERILGRVTVDDLIDPETQETVIFAGTMLDEDLVDLIDKLGIDEVKVRTPLTCDTRYGLCAQCYGRDLGRGTMVNAGEAVGVIAAQSIGEPGTQLTMRTFHVGGAASRAAVADKVEGKSAGTVRYTSNMRYVTSAKGEKVVISRSGEVLIVDDHGRERERHKVPYGAMLSVDEDKSVKAGAKLATWDPHTRPIITEYAGTVRFENVEEGVTVAKQVDDVTGLSTLVVIDHKRGGKAAVKGVRPVVKLLDESGQEVRVHGSDHTVSIAFQVGSIISVVDGQQVGVGDVLARMPQESAKTRDITGGLPRVAELFEARTPKDASVLAEVTGTISFGKDTKGKQRLVITDLEGNVHEFLISKDKHVLVHDGQVVNKGEKIVEGEPDPHDILRLQGIEALARYITDEVQDVYRLQGVKINDKHIEVIVRQMLRRVTIVEPGDTKFIKSEQVERAELLAENDRANAEGKIPATIEHMLLGITKASLSTDSFISAASFQETTRVLTEAAIMGKRDELRGLKENVIVGRLIPAGTGLAFHRSRKAQLAGEDIAASRQIEEATAENTTQEADQGL</sequence>